<feature type="chain" id="PRO_0000102469" description="Endoribonuclease YbeY">
    <location>
        <begin position="1"/>
        <end position="174"/>
    </location>
</feature>
<feature type="binding site" evidence="1">
    <location>
        <position position="129"/>
    </location>
    <ligand>
        <name>Zn(2+)</name>
        <dbReference type="ChEBI" id="CHEBI:29105"/>
        <note>catalytic</note>
    </ligand>
</feature>
<feature type="binding site" evidence="1">
    <location>
        <position position="133"/>
    </location>
    <ligand>
        <name>Zn(2+)</name>
        <dbReference type="ChEBI" id="CHEBI:29105"/>
        <note>catalytic</note>
    </ligand>
</feature>
<feature type="binding site" evidence="1">
    <location>
        <position position="139"/>
    </location>
    <ligand>
        <name>Zn(2+)</name>
        <dbReference type="ChEBI" id="CHEBI:29105"/>
        <note>catalytic</note>
    </ligand>
</feature>
<reference key="1">
    <citation type="journal article" date="2005" name="Proc. Natl. Acad. Sci. U.S.A.">
        <title>Complete genome sequence of the probiotic lactic acid bacterium Lactobacillus acidophilus NCFM.</title>
        <authorList>
            <person name="Altermann E."/>
            <person name="Russell W.M."/>
            <person name="Azcarate-Peril M.A."/>
            <person name="Barrangou R."/>
            <person name="Buck B.L."/>
            <person name="McAuliffe O."/>
            <person name="Souther N."/>
            <person name="Dobson A."/>
            <person name="Duong T."/>
            <person name="Callanan M."/>
            <person name="Lick S."/>
            <person name="Hamrick A."/>
            <person name="Cano R."/>
            <person name="Klaenhammer T.R."/>
        </authorList>
    </citation>
    <scope>NUCLEOTIDE SEQUENCE [LARGE SCALE GENOMIC DNA]</scope>
    <source>
        <strain>ATCC 700396 / NCK56 / N2 / NCFM</strain>
    </source>
</reference>
<keyword id="KW-0963">Cytoplasm</keyword>
<keyword id="KW-0255">Endonuclease</keyword>
<keyword id="KW-0378">Hydrolase</keyword>
<keyword id="KW-0479">Metal-binding</keyword>
<keyword id="KW-0540">Nuclease</keyword>
<keyword id="KW-1185">Reference proteome</keyword>
<keyword id="KW-0690">Ribosome biogenesis</keyword>
<keyword id="KW-0698">rRNA processing</keyword>
<keyword id="KW-0862">Zinc</keyword>
<accession>Q5FJT6</accession>
<proteinExistence type="inferred from homology"/>
<dbReference type="EC" id="3.1.-.-" evidence="1"/>
<dbReference type="EMBL" id="CP000033">
    <property type="protein sequence ID" value="AAV43038.1"/>
    <property type="molecule type" value="Genomic_DNA"/>
</dbReference>
<dbReference type="RefSeq" id="WP_003547628.1">
    <property type="nucleotide sequence ID" value="NC_006814.3"/>
</dbReference>
<dbReference type="RefSeq" id="YP_194069.1">
    <property type="nucleotide sequence ID" value="NC_006814.3"/>
</dbReference>
<dbReference type="SMR" id="Q5FJT6"/>
<dbReference type="STRING" id="272621.LBA1202"/>
<dbReference type="GeneID" id="93289703"/>
<dbReference type="KEGG" id="lac:LBA1202"/>
<dbReference type="PATRIC" id="fig|272621.13.peg.1140"/>
<dbReference type="eggNOG" id="COG0319">
    <property type="taxonomic scope" value="Bacteria"/>
</dbReference>
<dbReference type="HOGENOM" id="CLU_106710_3_0_9"/>
<dbReference type="OrthoDB" id="9807740at2"/>
<dbReference type="BioCyc" id="LACI272621:G1G49-1189-MONOMER"/>
<dbReference type="Proteomes" id="UP000006381">
    <property type="component" value="Chromosome"/>
</dbReference>
<dbReference type="GO" id="GO:0005737">
    <property type="term" value="C:cytoplasm"/>
    <property type="evidence" value="ECO:0007669"/>
    <property type="project" value="UniProtKB-SubCell"/>
</dbReference>
<dbReference type="GO" id="GO:0004222">
    <property type="term" value="F:metalloendopeptidase activity"/>
    <property type="evidence" value="ECO:0007669"/>
    <property type="project" value="InterPro"/>
</dbReference>
<dbReference type="GO" id="GO:0004521">
    <property type="term" value="F:RNA endonuclease activity"/>
    <property type="evidence" value="ECO:0007669"/>
    <property type="project" value="UniProtKB-UniRule"/>
</dbReference>
<dbReference type="GO" id="GO:0008270">
    <property type="term" value="F:zinc ion binding"/>
    <property type="evidence" value="ECO:0007669"/>
    <property type="project" value="UniProtKB-UniRule"/>
</dbReference>
<dbReference type="GO" id="GO:0006364">
    <property type="term" value="P:rRNA processing"/>
    <property type="evidence" value="ECO:0007669"/>
    <property type="project" value="UniProtKB-UniRule"/>
</dbReference>
<dbReference type="Gene3D" id="3.40.390.30">
    <property type="entry name" value="Metalloproteases ('zincins'), catalytic domain"/>
    <property type="match status" value="1"/>
</dbReference>
<dbReference type="HAMAP" id="MF_00009">
    <property type="entry name" value="Endoribonucl_YbeY"/>
    <property type="match status" value="1"/>
</dbReference>
<dbReference type="InterPro" id="IPR023091">
    <property type="entry name" value="MetalPrtase_cat_dom_sf_prd"/>
</dbReference>
<dbReference type="InterPro" id="IPR002036">
    <property type="entry name" value="YbeY"/>
</dbReference>
<dbReference type="InterPro" id="IPR020549">
    <property type="entry name" value="YbeY_CS"/>
</dbReference>
<dbReference type="NCBIfam" id="TIGR00043">
    <property type="entry name" value="rRNA maturation RNase YbeY"/>
    <property type="match status" value="1"/>
</dbReference>
<dbReference type="PANTHER" id="PTHR46986">
    <property type="entry name" value="ENDORIBONUCLEASE YBEY, CHLOROPLASTIC"/>
    <property type="match status" value="1"/>
</dbReference>
<dbReference type="PANTHER" id="PTHR46986:SF1">
    <property type="entry name" value="ENDORIBONUCLEASE YBEY, CHLOROPLASTIC"/>
    <property type="match status" value="1"/>
</dbReference>
<dbReference type="Pfam" id="PF02130">
    <property type="entry name" value="YbeY"/>
    <property type="match status" value="1"/>
</dbReference>
<dbReference type="SUPFAM" id="SSF55486">
    <property type="entry name" value="Metalloproteases ('zincins'), catalytic domain"/>
    <property type="match status" value="1"/>
</dbReference>
<dbReference type="PROSITE" id="PS01306">
    <property type="entry name" value="UPF0054"/>
    <property type="match status" value="1"/>
</dbReference>
<name>YBEY_LACAC</name>
<sequence>MDPIDITYNDEVGFLDDEKRDWKTWIMKLLLLAKKEIGKDNNLEMSINFVNEDRSHEINLKYRDKDRPTDVISFAIEDGEDSIDLAAFKDDPDFQEDIGDLFMCPSVISRHSKEYGTGFDREFGYTIVHGFLHLNGYDHIEPDEAKEMFGIQGKVLEDYGLPLYPDQLDEGRGK</sequence>
<gene>
    <name evidence="1" type="primary">ybeY</name>
    <name type="ordered locus">LBA1202</name>
</gene>
<organism>
    <name type="scientific">Lactobacillus acidophilus (strain ATCC 700396 / NCK56 / N2 / NCFM)</name>
    <dbReference type="NCBI Taxonomy" id="272621"/>
    <lineage>
        <taxon>Bacteria</taxon>
        <taxon>Bacillati</taxon>
        <taxon>Bacillota</taxon>
        <taxon>Bacilli</taxon>
        <taxon>Lactobacillales</taxon>
        <taxon>Lactobacillaceae</taxon>
        <taxon>Lactobacillus</taxon>
    </lineage>
</organism>
<protein>
    <recommendedName>
        <fullName evidence="1">Endoribonuclease YbeY</fullName>
        <ecNumber evidence="1">3.1.-.-</ecNumber>
    </recommendedName>
</protein>
<evidence type="ECO:0000255" key="1">
    <source>
        <dbReference type="HAMAP-Rule" id="MF_00009"/>
    </source>
</evidence>
<comment type="function">
    <text evidence="1">Single strand-specific metallo-endoribonuclease involved in late-stage 70S ribosome quality control and in maturation of the 3' terminus of the 16S rRNA.</text>
</comment>
<comment type="cofactor">
    <cofactor evidence="1">
        <name>Zn(2+)</name>
        <dbReference type="ChEBI" id="CHEBI:29105"/>
    </cofactor>
    <text evidence="1">Binds 1 zinc ion.</text>
</comment>
<comment type="subcellular location">
    <subcellularLocation>
        <location evidence="1">Cytoplasm</location>
    </subcellularLocation>
</comment>
<comment type="similarity">
    <text evidence="1">Belongs to the endoribonuclease YbeY family.</text>
</comment>